<organism>
    <name type="scientific">Streptococcus suis (strain 98HAH33)</name>
    <dbReference type="NCBI Taxonomy" id="391296"/>
    <lineage>
        <taxon>Bacteria</taxon>
        <taxon>Bacillati</taxon>
        <taxon>Bacillota</taxon>
        <taxon>Bacilli</taxon>
        <taxon>Lactobacillales</taxon>
        <taxon>Streptococcaceae</taxon>
        <taxon>Streptococcus</taxon>
    </lineage>
</organism>
<name>DAPB_STRS2</name>
<feature type="chain" id="PRO_1000008646" description="4-hydroxy-tetrahydrodipicolinate reductase">
    <location>
        <begin position="1"/>
        <end position="255"/>
    </location>
</feature>
<feature type="active site" description="Proton donor/acceptor" evidence="1">
    <location>
        <position position="145"/>
    </location>
</feature>
<feature type="active site" description="Proton donor" evidence="1">
    <location>
        <position position="149"/>
    </location>
</feature>
<feature type="binding site" evidence="1">
    <location>
        <begin position="9"/>
        <end position="14"/>
    </location>
    <ligand>
        <name>NAD(+)</name>
        <dbReference type="ChEBI" id="CHEBI:57540"/>
    </ligand>
</feature>
<feature type="binding site" evidence="1">
    <location>
        <begin position="89"/>
        <end position="91"/>
    </location>
    <ligand>
        <name>NAD(+)</name>
        <dbReference type="ChEBI" id="CHEBI:57540"/>
    </ligand>
</feature>
<feature type="binding site" evidence="1">
    <location>
        <begin position="115"/>
        <end position="118"/>
    </location>
    <ligand>
        <name>NAD(+)</name>
        <dbReference type="ChEBI" id="CHEBI:57540"/>
    </ligand>
</feature>
<feature type="binding site" evidence="1">
    <location>
        <position position="146"/>
    </location>
    <ligand>
        <name>(S)-2,3,4,5-tetrahydrodipicolinate</name>
        <dbReference type="ChEBI" id="CHEBI:16845"/>
    </ligand>
</feature>
<feature type="binding site" evidence="1">
    <location>
        <begin position="155"/>
        <end position="156"/>
    </location>
    <ligand>
        <name>(S)-2,3,4,5-tetrahydrodipicolinate</name>
        <dbReference type="ChEBI" id="CHEBI:16845"/>
    </ligand>
</feature>
<gene>
    <name evidence="1" type="primary">dapB</name>
    <name type="ordered locus">SSU98_0828</name>
</gene>
<protein>
    <recommendedName>
        <fullName evidence="1">4-hydroxy-tetrahydrodipicolinate reductase</fullName>
        <shortName evidence="1">HTPA reductase</shortName>
        <ecNumber evidence="1">1.17.1.8</ecNumber>
    </recommendedName>
</protein>
<dbReference type="EC" id="1.17.1.8" evidence="1"/>
<dbReference type="EMBL" id="CP000408">
    <property type="protein sequence ID" value="ABP91986.1"/>
    <property type="molecule type" value="Genomic_DNA"/>
</dbReference>
<dbReference type="SMR" id="A4W0U7"/>
<dbReference type="KEGG" id="ssv:SSU98_0828"/>
<dbReference type="HOGENOM" id="CLU_047479_0_1_9"/>
<dbReference type="UniPathway" id="UPA00034">
    <property type="reaction ID" value="UER00018"/>
</dbReference>
<dbReference type="GO" id="GO:0005829">
    <property type="term" value="C:cytosol"/>
    <property type="evidence" value="ECO:0007669"/>
    <property type="project" value="TreeGrafter"/>
</dbReference>
<dbReference type="GO" id="GO:0008839">
    <property type="term" value="F:4-hydroxy-tetrahydrodipicolinate reductase"/>
    <property type="evidence" value="ECO:0007669"/>
    <property type="project" value="UniProtKB-EC"/>
</dbReference>
<dbReference type="GO" id="GO:0051287">
    <property type="term" value="F:NAD binding"/>
    <property type="evidence" value="ECO:0007669"/>
    <property type="project" value="UniProtKB-UniRule"/>
</dbReference>
<dbReference type="GO" id="GO:0050661">
    <property type="term" value="F:NADP binding"/>
    <property type="evidence" value="ECO:0007669"/>
    <property type="project" value="UniProtKB-UniRule"/>
</dbReference>
<dbReference type="GO" id="GO:0016726">
    <property type="term" value="F:oxidoreductase activity, acting on CH or CH2 groups, NAD or NADP as acceptor"/>
    <property type="evidence" value="ECO:0007669"/>
    <property type="project" value="UniProtKB-UniRule"/>
</dbReference>
<dbReference type="GO" id="GO:0019877">
    <property type="term" value="P:diaminopimelate biosynthetic process"/>
    <property type="evidence" value="ECO:0007669"/>
    <property type="project" value="UniProtKB-UniRule"/>
</dbReference>
<dbReference type="GO" id="GO:0009089">
    <property type="term" value="P:lysine biosynthetic process via diaminopimelate"/>
    <property type="evidence" value="ECO:0007669"/>
    <property type="project" value="UniProtKB-UniRule"/>
</dbReference>
<dbReference type="CDD" id="cd02274">
    <property type="entry name" value="DHDPR_N"/>
    <property type="match status" value="1"/>
</dbReference>
<dbReference type="FunFam" id="3.30.360.10:FF:000009">
    <property type="entry name" value="4-hydroxy-tetrahydrodipicolinate reductase"/>
    <property type="match status" value="1"/>
</dbReference>
<dbReference type="Gene3D" id="3.30.360.10">
    <property type="entry name" value="Dihydrodipicolinate Reductase, domain 2"/>
    <property type="match status" value="1"/>
</dbReference>
<dbReference type="Gene3D" id="3.40.50.720">
    <property type="entry name" value="NAD(P)-binding Rossmann-like Domain"/>
    <property type="match status" value="1"/>
</dbReference>
<dbReference type="HAMAP" id="MF_00102">
    <property type="entry name" value="DapB"/>
    <property type="match status" value="1"/>
</dbReference>
<dbReference type="InterPro" id="IPR022663">
    <property type="entry name" value="DapB_C"/>
</dbReference>
<dbReference type="InterPro" id="IPR000846">
    <property type="entry name" value="DapB_N"/>
</dbReference>
<dbReference type="InterPro" id="IPR022664">
    <property type="entry name" value="DapB_N_CS"/>
</dbReference>
<dbReference type="InterPro" id="IPR023940">
    <property type="entry name" value="DHDPR_bac"/>
</dbReference>
<dbReference type="InterPro" id="IPR036291">
    <property type="entry name" value="NAD(P)-bd_dom_sf"/>
</dbReference>
<dbReference type="NCBIfam" id="TIGR00036">
    <property type="entry name" value="dapB"/>
    <property type="match status" value="1"/>
</dbReference>
<dbReference type="PANTHER" id="PTHR20836:SF0">
    <property type="entry name" value="4-HYDROXY-TETRAHYDRODIPICOLINATE REDUCTASE 1, CHLOROPLASTIC-RELATED"/>
    <property type="match status" value="1"/>
</dbReference>
<dbReference type="PANTHER" id="PTHR20836">
    <property type="entry name" value="DIHYDRODIPICOLINATE REDUCTASE"/>
    <property type="match status" value="1"/>
</dbReference>
<dbReference type="Pfam" id="PF05173">
    <property type="entry name" value="DapB_C"/>
    <property type="match status" value="1"/>
</dbReference>
<dbReference type="Pfam" id="PF01113">
    <property type="entry name" value="DapB_N"/>
    <property type="match status" value="1"/>
</dbReference>
<dbReference type="PIRSF" id="PIRSF000161">
    <property type="entry name" value="DHPR"/>
    <property type="match status" value="1"/>
</dbReference>
<dbReference type="SUPFAM" id="SSF55347">
    <property type="entry name" value="Glyceraldehyde-3-phosphate dehydrogenase-like, C-terminal domain"/>
    <property type="match status" value="1"/>
</dbReference>
<dbReference type="SUPFAM" id="SSF51735">
    <property type="entry name" value="NAD(P)-binding Rossmann-fold domains"/>
    <property type="match status" value="1"/>
</dbReference>
<dbReference type="PROSITE" id="PS01298">
    <property type="entry name" value="DAPB"/>
    <property type="match status" value="1"/>
</dbReference>
<keyword id="KW-0028">Amino-acid biosynthesis</keyword>
<keyword id="KW-0963">Cytoplasm</keyword>
<keyword id="KW-0220">Diaminopimelate biosynthesis</keyword>
<keyword id="KW-0457">Lysine biosynthesis</keyword>
<keyword id="KW-0520">NAD</keyword>
<keyword id="KW-0521">NADP</keyword>
<keyword id="KW-0560">Oxidoreductase</keyword>
<comment type="function">
    <text evidence="1">Catalyzes the conversion of 4-hydroxy-tetrahydrodipicolinate (HTPA) to tetrahydrodipicolinate.</text>
</comment>
<comment type="catalytic activity">
    <reaction evidence="1">
        <text>(S)-2,3,4,5-tetrahydrodipicolinate + NAD(+) + H2O = (2S,4S)-4-hydroxy-2,3,4,5-tetrahydrodipicolinate + NADH + H(+)</text>
        <dbReference type="Rhea" id="RHEA:35323"/>
        <dbReference type="ChEBI" id="CHEBI:15377"/>
        <dbReference type="ChEBI" id="CHEBI:15378"/>
        <dbReference type="ChEBI" id="CHEBI:16845"/>
        <dbReference type="ChEBI" id="CHEBI:57540"/>
        <dbReference type="ChEBI" id="CHEBI:57945"/>
        <dbReference type="ChEBI" id="CHEBI:67139"/>
        <dbReference type="EC" id="1.17.1.8"/>
    </reaction>
</comment>
<comment type="catalytic activity">
    <reaction evidence="1">
        <text>(S)-2,3,4,5-tetrahydrodipicolinate + NADP(+) + H2O = (2S,4S)-4-hydroxy-2,3,4,5-tetrahydrodipicolinate + NADPH + H(+)</text>
        <dbReference type="Rhea" id="RHEA:35331"/>
        <dbReference type="ChEBI" id="CHEBI:15377"/>
        <dbReference type="ChEBI" id="CHEBI:15378"/>
        <dbReference type="ChEBI" id="CHEBI:16845"/>
        <dbReference type="ChEBI" id="CHEBI:57783"/>
        <dbReference type="ChEBI" id="CHEBI:58349"/>
        <dbReference type="ChEBI" id="CHEBI:67139"/>
        <dbReference type="EC" id="1.17.1.8"/>
    </reaction>
</comment>
<comment type="pathway">
    <text evidence="1">Amino-acid biosynthesis; L-lysine biosynthesis via DAP pathway; (S)-tetrahydrodipicolinate from L-aspartate: step 4/4.</text>
</comment>
<comment type="subcellular location">
    <subcellularLocation>
        <location evidence="1">Cytoplasm</location>
    </subcellularLocation>
</comment>
<comment type="similarity">
    <text evidence="1">Belongs to the DapB family.</text>
</comment>
<comment type="caution">
    <text evidence="2">Was originally thought to be a dihydrodipicolinate reductase (DHDPR), catalyzing the conversion of dihydrodipicolinate to tetrahydrodipicolinate. However, it was shown in E.coli that the substrate of the enzymatic reaction is not dihydrodipicolinate (DHDP) but in fact (2S,4S)-4-hydroxy-2,3,4,5-tetrahydrodipicolinic acid (HTPA), the product released by the DapA-catalyzed reaction.</text>
</comment>
<sequence>MTIKVIIAGFKGKMGSTAVEMVKGDAALSLAALVDPFATETEVDGVPVFKTKEEVASLEADVWVDFTTPKFTYENTRFALENGFAPVVGTTGFTPEEIEELTALSAEKGLGGLIAPNFAIGAILLMQFAAQAAKYFPNLEIIELHHDKKKDAPSGTAVKTAELISQVRQSQTQGAADEEELIAGARGAAFDGFRIHSVRLPGLVAHQEVIFGAQGEGLTIRHDSYDRISFMGGVNLGIKEVVKRSQLVYGLEHLL</sequence>
<accession>A4W0U7</accession>
<proteinExistence type="inferred from homology"/>
<reference key="1">
    <citation type="journal article" date="2007" name="PLoS ONE">
        <title>A glimpse of streptococcal toxic shock syndrome from comparative genomics of S. suis 2 Chinese isolates.</title>
        <authorList>
            <person name="Chen C."/>
            <person name="Tang J."/>
            <person name="Dong W."/>
            <person name="Wang C."/>
            <person name="Feng Y."/>
            <person name="Wang J."/>
            <person name="Zheng F."/>
            <person name="Pan X."/>
            <person name="Liu D."/>
            <person name="Li M."/>
            <person name="Song Y."/>
            <person name="Zhu X."/>
            <person name="Sun H."/>
            <person name="Feng T."/>
            <person name="Guo Z."/>
            <person name="Ju A."/>
            <person name="Ge J."/>
            <person name="Dong Y."/>
            <person name="Sun W."/>
            <person name="Jiang Y."/>
            <person name="Wang J."/>
            <person name="Yan J."/>
            <person name="Yang H."/>
            <person name="Wang X."/>
            <person name="Gao G.F."/>
            <person name="Yang R."/>
            <person name="Wang J."/>
            <person name="Yu J."/>
        </authorList>
    </citation>
    <scope>NUCLEOTIDE SEQUENCE [LARGE SCALE GENOMIC DNA]</scope>
    <source>
        <strain>98HAH33</strain>
    </source>
</reference>
<evidence type="ECO:0000255" key="1">
    <source>
        <dbReference type="HAMAP-Rule" id="MF_00102"/>
    </source>
</evidence>
<evidence type="ECO:0000305" key="2"/>